<protein>
    <recommendedName>
        <fullName>Protein MioC homolog</fullName>
    </recommendedName>
</protein>
<sequence>MHICILSGSTLGGAEYVAEHLNDVLETQGFSTALFHGPNLSDIENEKIWLVVTSTHGAGELPDNLKPLFDELANSQKDFSDVRFAVVGLGSSDYDTFCYAADKVEQTLQAKSAVKICETLKIDVLNVDDQESYAEEWLPSFIEGLK</sequence>
<dbReference type="EMBL" id="L42023">
    <property type="protein sequence ID" value="AAC22329.1"/>
    <property type="molecule type" value="Genomic_DNA"/>
</dbReference>
<dbReference type="PIR" id="C64085">
    <property type="entry name" value="C64085"/>
</dbReference>
<dbReference type="RefSeq" id="NP_438829.1">
    <property type="nucleotide sequence ID" value="NC_000907.1"/>
</dbReference>
<dbReference type="SMR" id="P44813"/>
<dbReference type="STRING" id="71421.HI_0669"/>
<dbReference type="EnsemblBacteria" id="AAC22329">
    <property type="protein sequence ID" value="AAC22329"/>
    <property type="gene ID" value="HI_0669"/>
</dbReference>
<dbReference type="KEGG" id="hin:HI_0669"/>
<dbReference type="PATRIC" id="fig|71421.8.peg.699"/>
<dbReference type="eggNOG" id="COG0716">
    <property type="taxonomic scope" value="Bacteria"/>
</dbReference>
<dbReference type="HOGENOM" id="CLU_051402_4_1_6"/>
<dbReference type="OrthoDB" id="359268at2"/>
<dbReference type="PhylomeDB" id="P44813"/>
<dbReference type="BioCyc" id="HINF71421:G1GJ1-704-MONOMER"/>
<dbReference type="Proteomes" id="UP000000579">
    <property type="component" value="Chromosome"/>
</dbReference>
<dbReference type="GO" id="GO:0010181">
    <property type="term" value="F:FMN binding"/>
    <property type="evidence" value="ECO:0007669"/>
    <property type="project" value="InterPro"/>
</dbReference>
<dbReference type="Gene3D" id="3.40.50.360">
    <property type="match status" value="1"/>
</dbReference>
<dbReference type="InterPro" id="IPR001094">
    <property type="entry name" value="Flavdoxin-like"/>
</dbReference>
<dbReference type="InterPro" id="IPR008254">
    <property type="entry name" value="Flavodoxin/NO_synth"/>
</dbReference>
<dbReference type="InterPro" id="IPR029039">
    <property type="entry name" value="Flavoprotein-like_sf"/>
</dbReference>
<dbReference type="NCBIfam" id="NF006531">
    <property type="entry name" value="PRK09004.1"/>
    <property type="match status" value="1"/>
</dbReference>
<dbReference type="PANTHER" id="PTHR19384:SF128">
    <property type="entry name" value="NADPH OXIDOREDUCTASE A"/>
    <property type="match status" value="1"/>
</dbReference>
<dbReference type="PANTHER" id="PTHR19384">
    <property type="entry name" value="NITRIC OXIDE SYNTHASE-RELATED"/>
    <property type="match status" value="1"/>
</dbReference>
<dbReference type="Pfam" id="PF00258">
    <property type="entry name" value="Flavodoxin_1"/>
    <property type="match status" value="1"/>
</dbReference>
<dbReference type="PRINTS" id="PR00369">
    <property type="entry name" value="FLAVODOXIN"/>
</dbReference>
<dbReference type="SUPFAM" id="SSF52218">
    <property type="entry name" value="Flavoproteins"/>
    <property type="match status" value="1"/>
</dbReference>
<dbReference type="PROSITE" id="PS50902">
    <property type="entry name" value="FLAVODOXIN_LIKE"/>
    <property type="match status" value="1"/>
</dbReference>
<gene>
    <name type="primary">mioC</name>
    <name type="ordered locus">HI_0669</name>
</gene>
<comment type="function">
    <text evidence="1">Probable electron transporter required for biotin synthase activity.</text>
</comment>
<comment type="cofactor">
    <cofactor evidence="1">
        <name>FMN</name>
        <dbReference type="ChEBI" id="CHEBI:58210"/>
    </cofactor>
</comment>
<comment type="similarity">
    <text evidence="3">Belongs to the flavodoxin family. MioC subfamily.</text>
</comment>
<reference key="1">
    <citation type="journal article" date="1995" name="Science">
        <title>Whole-genome random sequencing and assembly of Haemophilus influenzae Rd.</title>
        <authorList>
            <person name="Fleischmann R.D."/>
            <person name="Adams M.D."/>
            <person name="White O."/>
            <person name="Clayton R.A."/>
            <person name="Kirkness E.F."/>
            <person name="Kerlavage A.R."/>
            <person name="Bult C.J."/>
            <person name="Tomb J.-F."/>
            <person name="Dougherty B.A."/>
            <person name="Merrick J.M."/>
            <person name="McKenney K."/>
            <person name="Sutton G.G."/>
            <person name="FitzHugh W."/>
            <person name="Fields C.A."/>
            <person name="Gocayne J.D."/>
            <person name="Scott J.D."/>
            <person name="Shirley R."/>
            <person name="Liu L.-I."/>
            <person name="Glodek A."/>
            <person name="Kelley J.M."/>
            <person name="Weidman J.F."/>
            <person name="Phillips C.A."/>
            <person name="Spriggs T."/>
            <person name="Hedblom E."/>
            <person name="Cotton M.D."/>
            <person name="Utterback T.R."/>
            <person name="Hanna M.C."/>
            <person name="Nguyen D.T."/>
            <person name="Saudek D.M."/>
            <person name="Brandon R.C."/>
            <person name="Fine L.D."/>
            <person name="Fritchman J.L."/>
            <person name="Fuhrmann J.L."/>
            <person name="Geoghagen N.S.M."/>
            <person name="Gnehm C.L."/>
            <person name="McDonald L.A."/>
            <person name="Small K.V."/>
            <person name="Fraser C.M."/>
            <person name="Smith H.O."/>
            <person name="Venter J.C."/>
        </authorList>
    </citation>
    <scope>NUCLEOTIDE SEQUENCE [LARGE SCALE GENOMIC DNA]</scope>
    <source>
        <strain>ATCC 51907 / DSM 11121 / KW20 / Rd</strain>
    </source>
</reference>
<feature type="chain" id="PRO_0000196574" description="Protein MioC homolog">
    <location>
        <begin position="1"/>
        <end position="146"/>
    </location>
</feature>
<feature type="domain" description="Flavodoxin-like" evidence="2">
    <location>
        <begin position="3"/>
        <end position="142"/>
    </location>
</feature>
<keyword id="KW-0249">Electron transport</keyword>
<keyword id="KW-0285">Flavoprotein</keyword>
<keyword id="KW-0288">FMN</keyword>
<keyword id="KW-1185">Reference proteome</keyword>
<keyword id="KW-0813">Transport</keyword>
<proteinExistence type="inferred from homology"/>
<accession>P44813</accession>
<organism>
    <name type="scientific">Haemophilus influenzae (strain ATCC 51907 / DSM 11121 / KW20 / Rd)</name>
    <dbReference type="NCBI Taxonomy" id="71421"/>
    <lineage>
        <taxon>Bacteria</taxon>
        <taxon>Pseudomonadati</taxon>
        <taxon>Pseudomonadota</taxon>
        <taxon>Gammaproteobacteria</taxon>
        <taxon>Pasteurellales</taxon>
        <taxon>Pasteurellaceae</taxon>
        <taxon>Haemophilus</taxon>
    </lineage>
</organism>
<evidence type="ECO:0000250" key="1"/>
<evidence type="ECO:0000255" key="2">
    <source>
        <dbReference type="PROSITE-ProRule" id="PRU00088"/>
    </source>
</evidence>
<evidence type="ECO:0000305" key="3"/>
<name>MIOC_HAEIN</name>